<feature type="chain" id="PRO_0000267873" description="Large ribosomal subunit protein bL17">
    <location>
        <begin position="1"/>
        <end position="120"/>
    </location>
</feature>
<reference key="1">
    <citation type="journal article" date="2004" name="Nucleic Acids Res.">
        <title>Thermoadaptation trait revealed by the genome sequence of thermophilic Geobacillus kaustophilus.</title>
        <authorList>
            <person name="Takami H."/>
            <person name="Takaki Y."/>
            <person name="Chee G.-J."/>
            <person name="Nishi S."/>
            <person name="Shimamura S."/>
            <person name="Suzuki H."/>
            <person name="Matsui S."/>
            <person name="Uchiyama I."/>
        </authorList>
    </citation>
    <scope>NUCLEOTIDE SEQUENCE [LARGE SCALE GENOMIC DNA]</scope>
    <source>
        <strain>HTA426</strain>
    </source>
</reference>
<accession>Q5L3R1</accession>
<keyword id="KW-1185">Reference proteome</keyword>
<keyword id="KW-0687">Ribonucleoprotein</keyword>
<keyword id="KW-0689">Ribosomal protein</keyword>
<sequence length="120" mass="13630">MSYRKLGRTTSQRKALLRDLATDLIINERIETTEARAKELRSVMEKMITLGKRGDLHARRQAAAFIRKEVANSETGQDALQKLFSDIAPRYQDRQGGYTRIMKLGPRRGDGAPMVIIELV</sequence>
<evidence type="ECO:0000255" key="1">
    <source>
        <dbReference type="HAMAP-Rule" id="MF_01368"/>
    </source>
</evidence>
<evidence type="ECO:0000305" key="2"/>
<gene>
    <name evidence="1" type="primary">rplQ</name>
    <name type="ordered locus">GK0134</name>
</gene>
<protein>
    <recommendedName>
        <fullName evidence="1">Large ribosomal subunit protein bL17</fullName>
    </recommendedName>
    <alternativeName>
        <fullName evidence="2">50S ribosomal protein L17</fullName>
    </alternativeName>
</protein>
<dbReference type="EMBL" id="BA000043">
    <property type="protein sequence ID" value="BAD74419.1"/>
    <property type="molecule type" value="Genomic_DNA"/>
</dbReference>
<dbReference type="RefSeq" id="WP_011229646.1">
    <property type="nucleotide sequence ID" value="NC_006510.1"/>
</dbReference>
<dbReference type="SMR" id="Q5L3R1"/>
<dbReference type="STRING" id="235909.GK0134"/>
<dbReference type="GeneID" id="32062122"/>
<dbReference type="KEGG" id="gka:GK0134"/>
<dbReference type="eggNOG" id="COG0203">
    <property type="taxonomic scope" value="Bacteria"/>
</dbReference>
<dbReference type="HOGENOM" id="CLU_074407_2_2_9"/>
<dbReference type="Proteomes" id="UP000001172">
    <property type="component" value="Chromosome"/>
</dbReference>
<dbReference type="GO" id="GO:0022625">
    <property type="term" value="C:cytosolic large ribosomal subunit"/>
    <property type="evidence" value="ECO:0007669"/>
    <property type="project" value="TreeGrafter"/>
</dbReference>
<dbReference type="GO" id="GO:0003735">
    <property type="term" value="F:structural constituent of ribosome"/>
    <property type="evidence" value="ECO:0007669"/>
    <property type="project" value="InterPro"/>
</dbReference>
<dbReference type="GO" id="GO:0006412">
    <property type="term" value="P:translation"/>
    <property type="evidence" value="ECO:0007669"/>
    <property type="project" value="UniProtKB-UniRule"/>
</dbReference>
<dbReference type="FunFam" id="3.90.1030.10:FF:000002">
    <property type="entry name" value="50S ribosomal protein L17"/>
    <property type="match status" value="1"/>
</dbReference>
<dbReference type="Gene3D" id="3.90.1030.10">
    <property type="entry name" value="Ribosomal protein L17"/>
    <property type="match status" value="1"/>
</dbReference>
<dbReference type="HAMAP" id="MF_01368">
    <property type="entry name" value="Ribosomal_bL17"/>
    <property type="match status" value="1"/>
</dbReference>
<dbReference type="InterPro" id="IPR000456">
    <property type="entry name" value="Ribosomal_bL17"/>
</dbReference>
<dbReference type="InterPro" id="IPR047859">
    <property type="entry name" value="Ribosomal_bL17_CS"/>
</dbReference>
<dbReference type="InterPro" id="IPR036373">
    <property type="entry name" value="Ribosomal_bL17_sf"/>
</dbReference>
<dbReference type="NCBIfam" id="TIGR00059">
    <property type="entry name" value="L17"/>
    <property type="match status" value="1"/>
</dbReference>
<dbReference type="PANTHER" id="PTHR14413:SF16">
    <property type="entry name" value="LARGE RIBOSOMAL SUBUNIT PROTEIN BL17M"/>
    <property type="match status" value="1"/>
</dbReference>
<dbReference type="PANTHER" id="PTHR14413">
    <property type="entry name" value="RIBOSOMAL PROTEIN L17"/>
    <property type="match status" value="1"/>
</dbReference>
<dbReference type="Pfam" id="PF01196">
    <property type="entry name" value="Ribosomal_L17"/>
    <property type="match status" value="1"/>
</dbReference>
<dbReference type="SUPFAM" id="SSF64263">
    <property type="entry name" value="Prokaryotic ribosomal protein L17"/>
    <property type="match status" value="1"/>
</dbReference>
<dbReference type="PROSITE" id="PS01167">
    <property type="entry name" value="RIBOSOMAL_L17"/>
    <property type="match status" value="1"/>
</dbReference>
<organism>
    <name type="scientific">Geobacillus kaustophilus (strain HTA426)</name>
    <dbReference type="NCBI Taxonomy" id="235909"/>
    <lineage>
        <taxon>Bacteria</taxon>
        <taxon>Bacillati</taxon>
        <taxon>Bacillota</taxon>
        <taxon>Bacilli</taxon>
        <taxon>Bacillales</taxon>
        <taxon>Anoxybacillaceae</taxon>
        <taxon>Geobacillus</taxon>
        <taxon>Geobacillus thermoleovorans group</taxon>
    </lineage>
</organism>
<comment type="subunit">
    <text evidence="1">Part of the 50S ribosomal subunit. Contacts protein L32.</text>
</comment>
<comment type="similarity">
    <text evidence="1">Belongs to the bacterial ribosomal protein bL17 family.</text>
</comment>
<proteinExistence type="inferred from homology"/>
<name>RL17_GEOKA</name>